<keyword id="KW-0249">Electron transport</keyword>
<keyword id="KW-0349">Heme</keyword>
<keyword id="KW-0408">Iron</keyword>
<keyword id="KW-0472">Membrane</keyword>
<keyword id="KW-0479">Metal-binding</keyword>
<keyword id="KW-0496">Mitochondrion</keyword>
<keyword id="KW-0999">Mitochondrion inner membrane</keyword>
<keyword id="KW-0679">Respiratory chain</keyword>
<keyword id="KW-0812">Transmembrane</keyword>
<keyword id="KW-1133">Transmembrane helix</keyword>
<keyword id="KW-0813">Transport</keyword>
<keyword id="KW-0830">Ubiquinone</keyword>
<feature type="chain" id="PRO_0000254661" description="Cytochrome b">
    <location>
        <begin position="1"/>
        <end position="379"/>
    </location>
</feature>
<feature type="transmembrane region" description="Helical" evidence="2">
    <location>
        <begin position="33"/>
        <end position="53"/>
    </location>
</feature>
<feature type="transmembrane region" description="Helical" evidence="2">
    <location>
        <begin position="77"/>
        <end position="98"/>
    </location>
</feature>
<feature type="transmembrane region" description="Helical" evidence="2">
    <location>
        <begin position="113"/>
        <end position="133"/>
    </location>
</feature>
<feature type="transmembrane region" description="Helical" evidence="2">
    <location>
        <begin position="178"/>
        <end position="198"/>
    </location>
</feature>
<feature type="transmembrane region" description="Helical" evidence="2">
    <location>
        <begin position="226"/>
        <end position="246"/>
    </location>
</feature>
<feature type="transmembrane region" description="Helical" evidence="2">
    <location>
        <begin position="288"/>
        <end position="308"/>
    </location>
</feature>
<feature type="transmembrane region" description="Helical" evidence="2">
    <location>
        <begin position="320"/>
        <end position="340"/>
    </location>
</feature>
<feature type="transmembrane region" description="Helical" evidence="2">
    <location>
        <begin position="347"/>
        <end position="367"/>
    </location>
</feature>
<feature type="binding site" description="axial binding residue" evidence="2">
    <location>
        <position position="83"/>
    </location>
    <ligand>
        <name>heme b</name>
        <dbReference type="ChEBI" id="CHEBI:60344"/>
        <label>b562</label>
    </ligand>
    <ligandPart>
        <name>Fe</name>
        <dbReference type="ChEBI" id="CHEBI:18248"/>
    </ligandPart>
</feature>
<feature type="binding site" description="axial binding residue" evidence="2">
    <location>
        <position position="97"/>
    </location>
    <ligand>
        <name>heme b</name>
        <dbReference type="ChEBI" id="CHEBI:60344"/>
        <label>b566</label>
    </ligand>
    <ligandPart>
        <name>Fe</name>
        <dbReference type="ChEBI" id="CHEBI:18248"/>
    </ligandPart>
</feature>
<feature type="binding site" description="axial binding residue" evidence="2">
    <location>
        <position position="182"/>
    </location>
    <ligand>
        <name>heme b</name>
        <dbReference type="ChEBI" id="CHEBI:60344"/>
        <label>b562</label>
    </ligand>
    <ligandPart>
        <name>Fe</name>
        <dbReference type="ChEBI" id="CHEBI:18248"/>
    </ligandPart>
</feature>
<feature type="binding site" description="axial binding residue" evidence="2">
    <location>
        <position position="196"/>
    </location>
    <ligand>
        <name>heme b</name>
        <dbReference type="ChEBI" id="CHEBI:60344"/>
        <label>b566</label>
    </ligand>
    <ligandPart>
        <name>Fe</name>
        <dbReference type="ChEBI" id="CHEBI:18248"/>
    </ligandPart>
</feature>
<feature type="binding site" evidence="2">
    <location>
        <position position="201"/>
    </location>
    <ligand>
        <name>a ubiquinone</name>
        <dbReference type="ChEBI" id="CHEBI:16389"/>
    </ligand>
</feature>
<feature type="sequence variant" description="In strain: Isolate SO-2000/12/28-1.">
    <original>I</original>
    <variation>M</variation>
    <location>
        <position position="92"/>
    </location>
</feature>
<feature type="sequence variant" description="In strain: Isolate SO-2000/12/28-1.">
    <original>I</original>
    <variation>T</variation>
    <location>
        <position position="334"/>
    </location>
</feature>
<geneLocation type="mitochondrion"/>
<reference key="1">
    <citation type="submission" date="2004-03" db="EMBL/GenBank/DDBJ databases">
        <title>Molecular phylogenetics of the Soricidae (Insectivora, Mammalia) based on mitochondrial cytochrome b gene sequences.</title>
        <authorList>
            <person name="Ohdachi S.D."/>
            <person name="Iwasa M.A."/>
            <person name="Abe H."/>
            <person name="Vogel P."/>
            <person name="Oshida T."/>
            <person name="Lin L.K."/>
            <person name="Hasegawa M."/>
        </authorList>
    </citation>
    <scope>NUCLEOTIDE SEQUENCE [GENOMIC DNA]</scope>
    <source>
        <strain>Isolate SO-2000/12/22-1</strain>
        <strain>Isolate SO-2000/12/28-1</strain>
        <tissue>Liver</tissue>
    </source>
</reference>
<proteinExistence type="inferred from homology"/>
<evidence type="ECO:0000250" key="1"/>
<evidence type="ECO:0000250" key="2">
    <source>
        <dbReference type="UniProtKB" id="P00157"/>
    </source>
</evidence>
<evidence type="ECO:0000255" key="3">
    <source>
        <dbReference type="PROSITE-ProRule" id="PRU00967"/>
    </source>
</evidence>
<evidence type="ECO:0000255" key="4">
    <source>
        <dbReference type="PROSITE-ProRule" id="PRU00968"/>
    </source>
</evidence>
<comment type="function">
    <text evidence="2">Component of the ubiquinol-cytochrome c reductase complex (complex III or cytochrome b-c1 complex) that is part of the mitochondrial respiratory chain. The b-c1 complex mediates electron transfer from ubiquinol to cytochrome c. Contributes to the generation of a proton gradient across the mitochondrial membrane that is then used for ATP synthesis.</text>
</comment>
<comment type="cofactor">
    <cofactor evidence="2">
        <name>heme b</name>
        <dbReference type="ChEBI" id="CHEBI:60344"/>
    </cofactor>
    <text evidence="2">Binds 2 heme b groups non-covalently.</text>
</comment>
<comment type="subunit">
    <text evidence="2">The cytochrome bc1 complex contains 11 subunits: 3 respiratory subunits (MT-CYB, CYC1 and UQCRFS1), 2 core proteins (UQCRC1 and UQCRC2) and 6 low-molecular weight proteins (UQCRH/QCR6, UQCRB/QCR7, UQCRQ/QCR8, UQCR10/QCR9, UQCR11/QCR10 and a cleavage product of UQCRFS1). This cytochrome bc1 complex then forms a dimer.</text>
</comment>
<comment type="subcellular location">
    <subcellularLocation>
        <location evidence="2">Mitochondrion inner membrane</location>
        <topology evidence="2">Multi-pass membrane protein</topology>
    </subcellularLocation>
</comment>
<comment type="miscellaneous">
    <text evidence="1">Heme 1 (or BL or b562) is low-potential and absorbs at about 562 nm, and heme 2 (or BH or b566) is high-potential and absorbs at about 566 nm.</text>
</comment>
<comment type="similarity">
    <text evidence="3 4">Belongs to the cytochrome b family.</text>
</comment>
<comment type="caution">
    <text evidence="2">The full-length protein contains only eight transmembrane helices, not nine as predicted by bioinformatics tools.</text>
</comment>
<sequence>MTNIRKTHPLMKIINNSFIDLPTPSNISSWWNFGSLLGICLIIQILTGLFLAMHYTSDTLTAFSSVTHICRDVNYGWLIRYLHANGASMFFICLFLHVGRGLYYGSYLFLETWNIGVLLLFAVMATAFMGYVLPWGQMSFWGATVITNLLSAIPYIGSDLVQWIWGGFSVDKATLTRFFAFHFILPFIVAALAGVHLLFLHETGSNNPSGLSSDADKIPFHPYYTIKDILGALMLILILMMLVLFSPDLLGDPDNYTPANPLNTPPHIKPEWYFLFAYAILRSIPNKLGGVLALVLSILVLAFMPLLHTSKQRSMMFRPLSQCLFWILVADLIILTWIGGQPVEHPFIIIGQLASILYFMLILILMPLVSLFENNLMKW</sequence>
<organism>
    <name type="scientific">Anourosorex yamashinai</name>
    <name type="common">Taiwanese mole shrew</name>
    <name type="synonym">Anourosorex squamipes yamashinai</name>
    <dbReference type="NCBI Taxonomy" id="268756"/>
    <lineage>
        <taxon>Eukaryota</taxon>
        <taxon>Metazoa</taxon>
        <taxon>Chordata</taxon>
        <taxon>Craniata</taxon>
        <taxon>Vertebrata</taxon>
        <taxon>Euteleostomi</taxon>
        <taxon>Mammalia</taxon>
        <taxon>Eutheria</taxon>
        <taxon>Laurasiatheria</taxon>
        <taxon>Eulipotyphla</taxon>
        <taxon>Soricidae</taxon>
        <taxon>Soricinae</taxon>
        <taxon>Anourosorex</taxon>
    </lineage>
</organism>
<name>CYB_ANOYA</name>
<dbReference type="EMBL" id="AB175088">
    <property type="protein sequence ID" value="BAE92653.1"/>
    <property type="molecule type" value="Genomic_DNA"/>
</dbReference>
<dbReference type="EMBL" id="AB175089">
    <property type="protein sequence ID" value="BAE92654.1"/>
    <property type="molecule type" value="Genomic_DNA"/>
</dbReference>
<dbReference type="SMR" id="Q1XIP3"/>
<dbReference type="GO" id="GO:0005743">
    <property type="term" value="C:mitochondrial inner membrane"/>
    <property type="evidence" value="ECO:0007669"/>
    <property type="project" value="UniProtKB-SubCell"/>
</dbReference>
<dbReference type="GO" id="GO:0045275">
    <property type="term" value="C:respiratory chain complex III"/>
    <property type="evidence" value="ECO:0007669"/>
    <property type="project" value="InterPro"/>
</dbReference>
<dbReference type="GO" id="GO:0046872">
    <property type="term" value="F:metal ion binding"/>
    <property type="evidence" value="ECO:0007669"/>
    <property type="project" value="UniProtKB-KW"/>
</dbReference>
<dbReference type="GO" id="GO:0008121">
    <property type="term" value="F:ubiquinol-cytochrome-c reductase activity"/>
    <property type="evidence" value="ECO:0007669"/>
    <property type="project" value="InterPro"/>
</dbReference>
<dbReference type="GO" id="GO:0006122">
    <property type="term" value="P:mitochondrial electron transport, ubiquinol to cytochrome c"/>
    <property type="evidence" value="ECO:0007669"/>
    <property type="project" value="TreeGrafter"/>
</dbReference>
<dbReference type="CDD" id="cd00290">
    <property type="entry name" value="cytochrome_b_C"/>
    <property type="match status" value="1"/>
</dbReference>
<dbReference type="CDD" id="cd00284">
    <property type="entry name" value="Cytochrome_b_N"/>
    <property type="match status" value="1"/>
</dbReference>
<dbReference type="FunFam" id="1.20.810.10:FF:000002">
    <property type="entry name" value="Cytochrome b"/>
    <property type="match status" value="1"/>
</dbReference>
<dbReference type="Gene3D" id="1.20.810.10">
    <property type="entry name" value="Cytochrome Bc1 Complex, Chain C"/>
    <property type="match status" value="1"/>
</dbReference>
<dbReference type="InterPro" id="IPR005798">
    <property type="entry name" value="Cyt_b/b6_C"/>
</dbReference>
<dbReference type="InterPro" id="IPR036150">
    <property type="entry name" value="Cyt_b/b6_C_sf"/>
</dbReference>
<dbReference type="InterPro" id="IPR005797">
    <property type="entry name" value="Cyt_b/b6_N"/>
</dbReference>
<dbReference type="InterPro" id="IPR027387">
    <property type="entry name" value="Cytb/b6-like_sf"/>
</dbReference>
<dbReference type="InterPro" id="IPR030689">
    <property type="entry name" value="Cytochrome_b"/>
</dbReference>
<dbReference type="InterPro" id="IPR048260">
    <property type="entry name" value="Cytochrome_b_C_euk/bac"/>
</dbReference>
<dbReference type="InterPro" id="IPR048259">
    <property type="entry name" value="Cytochrome_b_N_euk/bac"/>
</dbReference>
<dbReference type="InterPro" id="IPR016174">
    <property type="entry name" value="Di-haem_cyt_TM"/>
</dbReference>
<dbReference type="PANTHER" id="PTHR19271">
    <property type="entry name" value="CYTOCHROME B"/>
    <property type="match status" value="1"/>
</dbReference>
<dbReference type="PANTHER" id="PTHR19271:SF16">
    <property type="entry name" value="CYTOCHROME B"/>
    <property type="match status" value="1"/>
</dbReference>
<dbReference type="Pfam" id="PF00032">
    <property type="entry name" value="Cytochrom_B_C"/>
    <property type="match status" value="1"/>
</dbReference>
<dbReference type="Pfam" id="PF00033">
    <property type="entry name" value="Cytochrome_B"/>
    <property type="match status" value="1"/>
</dbReference>
<dbReference type="PIRSF" id="PIRSF038885">
    <property type="entry name" value="COB"/>
    <property type="match status" value="1"/>
</dbReference>
<dbReference type="SUPFAM" id="SSF81648">
    <property type="entry name" value="a domain/subunit of cytochrome bc1 complex (Ubiquinol-cytochrome c reductase)"/>
    <property type="match status" value="1"/>
</dbReference>
<dbReference type="SUPFAM" id="SSF81342">
    <property type="entry name" value="Transmembrane di-heme cytochromes"/>
    <property type="match status" value="1"/>
</dbReference>
<dbReference type="PROSITE" id="PS51003">
    <property type="entry name" value="CYTB_CTER"/>
    <property type="match status" value="1"/>
</dbReference>
<dbReference type="PROSITE" id="PS51002">
    <property type="entry name" value="CYTB_NTER"/>
    <property type="match status" value="1"/>
</dbReference>
<accession>Q1XIP3</accession>
<accession>Q1XIP2</accession>
<protein>
    <recommendedName>
        <fullName>Cytochrome b</fullName>
    </recommendedName>
    <alternativeName>
        <fullName>Complex III subunit 3</fullName>
    </alternativeName>
    <alternativeName>
        <fullName>Complex III subunit III</fullName>
    </alternativeName>
    <alternativeName>
        <fullName>Cytochrome b-c1 complex subunit 3</fullName>
    </alternativeName>
    <alternativeName>
        <fullName>Ubiquinol-cytochrome-c reductase complex cytochrome b subunit</fullName>
    </alternativeName>
</protein>
<gene>
    <name type="primary">MT-CYB</name>
    <name type="synonym">COB</name>
    <name type="synonym">CYTB</name>
    <name type="synonym">MTCYB</name>
</gene>